<accession>Q6NI61</accession>
<reference key="1">
    <citation type="journal article" date="2003" name="Nucleic Acids Res.">
        <title>The complete genome sequence and analysis of Corynebacterium diphtheriae NCTC13129.</title>
        <authorList>
            <person name="Cerdeno-Tarraga A.-M."/>
            <person name="Efstratiou A."/>
            <person name="Dover L.G."/>
            <person name="Holden M.T.G."/>
            <person name="Pallen M.J."/>
            <person name="Bentley S.D."/>
            <person name="Besra G.S."/>
            <person name="Churcher C.M."/>
            <person name="James K.D."/>
            <person name="De Zoysa A."/>
            <person name="Chillingworth T."/>
            <person name="Cronin A."/>
            <person name="Dowd L."/>
            <person name="Feltwell T."/>
            <person name="Hamlin N."/>
            <person name="Holroyd S."/>
            <person name="Jagels K."/>
            <person name="Moule S."/>
            <person name="Quail M.A."/>
            <person name="Rabbinowitsch E."/>
            <person name="Rutherford K.M."/>
            <person name="Thomson N.R."/>
            <person name="Unwin L."/>
            <person name="Whitehead S."/>
            <person name="Barrell B.G."/>
            <person name="Parkhill J."/>
        </authorList>
    </citation>
    <scope>NUCLEOTIDE SEQUENCE [LARGE SCALE GENOMIC DNA]</scope>
    <source>
        <strain>ATCC 700971 / NCTC 13129 / Biotype gravis</strain>
    </source>
</reference>
<name>ENO_CORDI</name>
<proteinExistence type="inferred from homology"/>
<feature type="chain" id="PRO_0000133874" description="Enolase">
    <location>
        <begin position="1"/>
        <end position="425"/>
    </location>
</feature>
<feature type="active site" description="Proton donor" evidence="1">
    <location>
        <position position="204"/>
    </location>
</feature>
<feature type="active site" description="Proton acceptor" evidence="1">
    <location>
        <position position="334"/>
    </location>
</feature>
<feature type="binding site" evidence="1">
    <location>
        <position position="162"/>
    </location>
    <ligand>
        <name>(2R)-2-phosphoglycerate</name>
        <dbReference type="ChEBI" id="CHEBI:58289"/>
    </ligand>
</feature>
<feature type="binding site" evidence="1">
    <location>
        <position position="241"/>
    </location>
    <ligand>
        <name>Mg(2+)</name>
        <dbReference type="ChEBI" id="CHEBI:18420"/>
    </ligand>
</feature>
<feature type="binding site" evidence="1">
    <location>
        <position position="282"/>
    </location>
    <ligand>
        <name>Mg(2+)</name>
        <dbReference type="ChEBI" id="CHEBI:18420"/>
    </ligand>
</feature>
<feature type="binding site" evidence="1">
    <location>
        <position position="309"/>
    </location>
    <ligand>
        <name>Mg(2+)</name>
        <dbReference type="ChEBI" id="CHEBI:18420"/>
    </ligand>
</feature>
<feature type="binding site" evidence="1">
    <location>
        <position position="334"/>
    </location>
    <ligand>
        <name>(2R)-2-phosphoglycerate</name>
        <dbReference type="ChEBI" id="CHEBI:58289"/>
    </ligand>
</feature>
<feature type="binding site" evidence="1">
    <location>
        <position position="363"/>
    </location>
    <ligand>
        <name>(2R)-2-phosphoglycerate</name>
        <dbReference type="ChEBI" id="CHEBI:58289"/>
    </ligand>
</feature>
<feature type="binding site" evidence="1">
    <location>
        <position position="364"/>
    </location>
    <ligand>
        <name>(2R)-2-phosphoglycerate</name>
        <dbReference type="ChEBI" id="CHEBI:58289"/>
    </ligand>
</feature>
<feature type="binding site" evidence="1">
    <location>
        <position position="385"/>
    </location>
    <ligand>
        <name>(2R)-2-phosphoglycerate</name>
        <dbReference type="ChEBI" id="CHEBI:58289"/>
    </ligand>
</feature>
<organism>
    <name type="scientific">Corynebacterium diphtheriae (strain ATCC 700971 / NCTC 13129 / Biotype gravis)</name>
    <dbReference type="NCBI Taxonomy" id="257309"/>
    <lineage>
        <taxon>Bacteria</taxon>
        <taxon>Bacillati</taxon>
        <taxon>Actinomycetota</taxon>
        <taxon>Actinomycetes</taxon>
        <taxon>Mycobacteriales</taxon>
        <taxon>Corynebacteriaceae</taxon>
        <taxon>Corynebacterium</taxon>
    </lineage>
</organism>
<evidence type="ECO:0000255" key="1">
    <source>
        <dbReference type="HAMAP-Rule" id="MF_00318"/>
    </source>
</evidence>
<sequence length="425" mass="45029">MADIMHVFAREILDSRGNPTVEAEVFLDDGSHGVAGVPSGASTGVHEAHELRDGGERYLGKGVLNAVNNVNEEIADAIAGAEADDQRLIDQAMIALDGTENKSRLGANAILGVSIAVAKAAAESAGLPLYRYIGGPNAHVLPVPMMNIVNGGAHADSGVDVQEFMIAPIGAESFSEALRMGAEVYHSLKSVIKSKGLSTGLGDEGGFAPSVESTKAALDLIVEAIEKAGFKPGADIALALDVASSEFYKDGKYHFEGGEHTAEEMAKVYEQLIAEYPIVSIEDPLQEDDWEGYTALTAAIGDKVQIVGDDFFVTNPARLKEGIEKKAANALLVKVNQIGTLTETFDAVDLAHRNGYRTMMSHRSGETEDTTIADLAVALGCGQIKTGAPARSERVAKYNQLLRIEQQLDDAAVYAGRSAFPRFQG</sequence>
<dbReference type="EC" id="4.2.1.11" evidence="1"/>
<dbReference type="EMBL" id="BX248356">
    <property type="protein sequence ID" value="CAE49433.1"/>
    <property type="molecule type" value="Genomic_DNA"/>
</dbReference>
<dbReference type="RefSeq" id="WP_003850833.1">
    <property type="nucleotide sequence ID" value="NC_002935.2"/>
</dbReference>
<dbReference type="SMR" id="Q6NI61"/>
<dbReference type="STRING" id="257309.DIP0917"/>
<dbReference type="KEGG" id="cdi:DIP0917"/>
<dbReference type="HOGENOM" id="CLU_031223_2_1_11"/>
<dbReference type="UniPathway" id="UPA00109">
    <property type="reaction ID" value="UER00187"/>
</dbReference>
<dbReference type="Proteomes" id="UP000002198">
    <property type="component" value="Chromosome"/>
</dbReference>
<dbReference type="GO" id="GO:0009986">
    <property type="term" value="C:cell surface"/>
    <property type="evidence" value="ECO:0007669"/>
    <property type="project" value="UniProtKB-SubCell"/>
</dbReference>
<dbReference type="GO" id="GO:0005576">
    <property type="term" value="C:extracellular region"/>
    <property type="evidence" value="ECO:0007669"/>
    <property type="project" value="UniProtKB-SubCell"/>
</dbReference>
<dbReference type="GO" id="GO:0000015">
    <property type="term" value="C:phosphopyruvate hydratase complex"/>
    <property type="evidence" value="ECO:0007669"/>
    <property type="project" value="InterPro"/>
</dbReference>
<dbReference type="GO" id="GO:0000287">
    <property type="term" value="F:magnesium ion binding"/>
    <property type="evidence" value="ECO:0007669"/>
    <property type="project" value="UniProtKB-UniRule"/>
</dbReference>
<dbReference type="GO" id="GO:0004634">
    <property type="term" value="F:phosphopyruvate hydratase activity"/>
    <property type="evidence" value="ECO:0007669"/>
    <property type="project" value="UniProtKB-UniRule"/>
</dbReference>
<dbReference type="GO" id="GO:0006096">
    <property type="term" value="P:glycolytic process"/>
    <property type="evidence" value="ECO:0007669"/>
    <property type="project" value="UniProtKB-UniRule"/>
</dbReference>
<dbReference type="CDD" id="cd03313">
    <property type="entry name" value="enolase"/>
    <property type="match status" value="1"/>
</dbReference>
<dbReference type="FunFam" id="3.20.20.120:FF:000001">
    <property type="entry name" value="Enolase"/>
    <property type="match status" value="1"/>
</dbReference>
<dbReference type="FunFam" id="3.30.390.10:FF:000001">
    <property type="entry name" value="Enolase"/>
    <property type="match status" value="1"/>
</dbReference>
<dbReference type="Gene3D" id="3.20.20.120">
    <property type="entry name" value="Enolase-like C-terminal domain"/>
    <property type="match status" value="1"/>
</dbReference>
<dbReference type="Gene3D" id="3.30.390.10">
    <property type="entry name" value="Enolase-like, N-terminal domain"/>
    <property type="match status" value="1"/>
</dbReference>
<dbReference type="HAMAP" id="MF_00318">
    <property type="entry name" value="Enolase"/>
    <property type="match status" value="1"/>
</dbReference>
<dbReference type="InterPro" id="IPR000941">
    <property type="entry name" value="Enolase"/>
</dbReference>
<dbReference type="InterPro" id="IPR036849">
    <property type="entry name" value="Enolase-like_C_sf"/>
</dbReference>
<dbReference type="InterPro" id="IPR029017">
    <property type="entry name" value="Enolase-like_N"/>
</dbReference>
<dbReference type="InterPro" id="IPR020810">
    <property type="entry name" value="Enolase_C"/>
</dbReference>
<dbReference type="InterPro" id="IPR020809">
    <property type="entry name" value="Enolase_CS"/>
</dbReference>
<dbReference type="InterPro" id="IPR020811">
    <property type="entry name" value="Enolase_N"/>
</dbReference>
<dbReference type="NCBIfam" id="TIGR01060">
    <property type="entry name" value="eno"/>
    <property type="match status" value="1"/>
</dbReference>
<dbReference type="PANTHER" id="PTHR11902">
    <property type="entry name" value="ENOLASE"/>
    <property type="match status" value="1"/>
</dbReference>
<dbReference type="PANTHER" id="PTHR11902:SF1">
    <property type="entry name" value="ENOLASE"/>
    <property type="match status" value="1"/>
</dbReference>
<dbReference type="Pfam" id="PF00113">
    <property type="entry name" value="Enolase_C"/>
    <property type="match status" value="1"/>
</dbReference>
<dbReference type="Pfam" id="PF03952">
    <property type="entry name" value="Enolase_N"/>
    <property type="match status" value="1"/>
</dbReference>
<dbReference type="PIRSF" id="PIRSF001400">
    <property type="entry name" value="Enolase"/>
    <property type="match status" value="1"/>
</dbReference>
<dbReference type="PRINTS" id="PR00148">
    <property type="entry name" value="ENOLASE"/>
</dbReference>
<dbReference type="SFLD" id="SFLDS00001">
    <property type="entry name" value="Enolase"/>
    <property type="match status" value="1"/>
</dbReference>
<dbReference type="SFLD" id="SFLDF00002">
    <property type="entry name" value="enolase"/>
    <property type="match status" value="1"/>
</dbReference>
<dbReference type="SMART" id="SM01192">
    <property type="entry name" value="Enolase_C"/>
    <property type="match status" value="1"/>
</dbReference>
<dbReference type="SMART" id="SM01193">
    <property type="entry name" value="Enolase_N"/>
    <property type="match status" value="1"/>
</dbReference>
<dbReference type="SUPFAM" id="SSF51604">
    <property type="entry name" value="Enolase C-terminal domain-like"/>
    <property type="match status" value="1"/>
</dbReference>
<dbReference type="SUPFAM" id="SSF54826">
    <property type="entry name" value="Enolase N-terminal domain-like"/>
    <property type="match status" value="1"/>
</dbReference>
<dbReference type="PROSITE" id="PS00164">
    <property type="entry name" value="ENOLASE"/>
    <property type="match status" value="1"/>
</dbReference>
<protein>
    <recommendedName>
        <fullName evidence="1">Enolase</fullName>
        <ecNumber evidence="1">4.2.1.11</ecNumber>
    </recommendedName>
    <alternativeName>
        <fullName evidence="1">2-phospho-D-glycerate hydro-lyase</fullName>
    </alternativeName>
    <alternativeName>
        <fullName evidence="1">2-phosphoglycerate dehydratase</fullName>
    </alternativeName>
</protein>
<gene>
    <name evidence="1" type="primary">eno</name>
    <name type="ordered locus">DIP0917</name>
</gene>
<keyword id="KW-0963">Cytoplasm</keyword>
<keyword id="KW-0324">Glycolysis</keyword>
<keyword id="KW-0456">Lyase</keyword>
<keyword id="KW-0460">Magnesium</keyword>
<keyword id="KW-0479">Metal-binding</keyword>
<keyword id="KW-1185">Reference proteome</keyword>
<keyword id="KW-0964">Secreted</keyword>
<comment type="function">
    <text evidence="1">Catalyzes the reversible conversion of 2-phosphoglycerate (2-PG) into phosphoenolpyruvate (PEP). It is essential for the degradation of carbohydrates via glycolysis.</text>
</comment>
<comment type="catalytic activity">
    <reaction evidence="1">
        <text>(2R)-2-phosphoglycerate = phosphoenolpyruvate + H2O</text>
        <dbReference type="Rhea" id="RHEA:10164"/>
        <dbReference type="ChEBI" id="CHEBI:15377"/>
        <dbReference type="ChEBI" id="CHEBI:58289"/>
        <dbReference type="ChEBI" id="CHEBI:58702"/>
        <dbReference type="EC" id="4.2.1.11"/>
    </reaction>
</comment>
<comment type="cofactor">
    <cofactor evidence="1">
        <name>Mg(2+)</name>
        <dbReference type="ChEBI" id="CHEBI:18420"/>
    </cofactor>
    <text evidence="1">Binds a second Mg(2+) ion via substrate during catalysis.</text>
</comment>
<comment type="pathway">
    <text evidence="1">Carbohydrate degradation; glycolysis; pyruvate from D-glyceraldehyde 3-phosphate: step 4/5.</text>
</comment>
<comment type="subcellular location">
    <subcellularLocation>
        <location evidence="1">Cytoplasm</location>
    </subcellularLocation>
    <subcellularLocation>
        <location evidence="1">Secreted</location>
    </subcellularLocation>
    <subcellularLocation>
        <location evidence="1">Cell surface</location>
    </subcellularLocation>
    <text evidence="1">Fractions of enolase are present in both the cytoplasm and on the cell surface.</text>
</comment>
<comment type="similarity">
    <text evidence="1">Belongs to the enolase family.</text>
</comment>